<accession>Q6F1S6</accession>
<comment type="function">
    <text evidence="1">Binds directly to 23S ribosomal RNA and is necessary for the in vitro assembly process of the 50S ribosomal subunit. It is not involved in the protein synthesizing functions of that subunit.</text>
</comment>
<comment type="similarity">
    <text evidence="1">Belongs to the bacterial ribosomal protein bL20 family.</text>
</comment>
<organism>
    <name type="scientific">Mesoplasma florum (strain ATCC 33453 / NBRC 100688 / NCTC 11704 / L1)</name>
    <name type="common">Acholeplasma florum</name>
    <dbReference type="NCBI Taxonomy" id="265311"/>
    <lineage>
        <taxon>Bacteria</taxon>
        <taxon>Bacillati</taxon>
        <taxon>Mycoplasmatota</taxon>
        <taxon>Mollicutes</taxon>
        <taxon>Entomoplasmatales</taxon>
        <taxon>Entomoplasmataceae</taxon>
        <taxon>Mesoplasma</taxon>
    </lineage>
</organism>
<gene>
    <name evidence="1" type="primary">rplT</name>
    <name type="ordered locus">Mfl190</name>
</gene>
<sequence length="120" mass="14011">MARVKFGKVTRARRKRWIKRAKGYYGTKHSSYKKAHEQVVRSMAYAFIGRKQKKRDFRKLWIVRINAAVRPYGLSYSKFMNGLKLANIDVNRKMLSELAISNPEQFKLLVDASNKALTSK</sequence>
<dbReference type="EMBL" id="AE017263">
    <property type="protein sequence ID" value="AAT75547.1"/>
    <property type="molecule type" value="Genomic_DNA"/>
</dbReference>
<dbReference type="RefSeq" id="WP_011183087.1">
    <property type="nucleotide sequence ID" value="NC_006055.1"/>
</dbReference>
<dbReference type="RefSeq" id="YP_053431.1">
    <property type="nucleotide sequence ID" value="NC_006055.1"/>
</dbReference>
<dbReference type="SMR" id="Q6F1S6"/>
<dbReference type="STRING" id="265311.Mfl190"/>
<dbReference type="PaxDb" id="265311-Mfl190"/>
<dbReference type="EnsemblBacteria" id="AAT75547">
    <property type="protein sequence ID" value="AAT75547"/>
    <property type="gene ID" value="Mfl190"/>
</dbReference>
<dbReference type="GeneID" id="2898198"/>
<dbReference type="KEGG" id="mfl:Mfl190"/>
<dbReference type="PATRIC" id="fig|265311.5.peg.191"/>
<dbReference type="eggNOG" id="COG0292">
    <property type="taxonomic scope" value="Bacteria"/>
</dbReference>
<dbReference type="HOGENOM" id="CLU_123265_0_1_14"/>
<dbReference type="OrthoDB" id="9808966at2"/>
<dbReference type="Proteomes" id="UP000006647">
    <property type="component" value="Chromosome"/>
</dbReference>
<dbReference type="GO" id="GO:1990904">
    <property type="term" value="C:ribonucleoprotein complex"/>
    <property type="evidence" value="ECO:0007669"/>
    <property type="project" value="UniProtKB-KW"/>
</dbReference>
<dbReference type="GO" id="GO:0005840">
    <property type="term" value="C:ribosome"/>
    <property type="evidence" value="ECO:0007669"/>
    <property type="project" value="UniProtKB-KW"/>
</dbReference>
<dbReference type="GO" id="GO:0019843">
    <property type="term" value="F:rRNA binding"/>
    <property type="evidence" value="ECO:0007669"/>
    <property type="project" value="UniProtKB-UniRule"/>
</dbReference>
<dbReference type="GO" id="GO:0003735">
    <property type="term" value="F:structural constituent of ribosome"/>
    <property type="evidence" value="ECO:0007669"/>
    <property type="project" value="InterPro"/>
</dbReference>
<dbReference type="GO" id="GO:0000027">
    <property type="term" value="P:ribosomal large subunit assembly"/>
    <property type="evidence" value="ECO:0007669"/>
    <property type="project" value="UniProtKB-UniRule"/>
</dbReference>
<dbReference type="GO" id="GO:0006412">
    <property type="term" value="P:translation"/>
    <property type="evidence" value="ECO:0007669"/>
    <property type="project" value="InterPro"/>
</dbReference>
<dbReference type="CDD" id="cd07026">
    <property type="entry name" value="Ribosomal_L20"/>
    <property type="match status" value="1"/>
</dbReference>
<dbReference type="FunFam" id="1.10.1900.20:FF:000001">
    <property type="entry name" value="50S ribosomal protein L20"/>
    <property type="match status" value="1"/>
</dbReference>
<dbReference type="Gene3D" id="6.10.160.10">
    <property type="match status" value="1"/>
</dbReference>
<dbReference type="Gene3D" id="1.10.1900.20">
    <property type="entry name" value="Ribosomal protein L20"/>
    <property type="match status" value="1"/>
</dbReference>
<dbReference type="HAMAP" id="MF_00382">
    <property type="entry name" value="Ribosomal_bL20"/>
    <property type="match status" value="1"/>
</dbReference>
<dbReference type="InterPro" id="IPR005813">
    <property type="entry name" value="Ribosomal_bL20"/>
</dbReference>
<dbReference type="InterPro" id="IPR049946">
    <property type="entry name" value="RIBOSOMAL_L20_CS"/>
</dbReference>
<dbReference type="InterPro" id="IPR035566">
    <property type="entry name" value="Ribosomal_protein_bL20_C"/>
</dbReference>
<dbReference type="NCBIfam" id="TIGR01032">
    <property type="entry name" value="rplT_bact"/>
    <property type="match status" value="1"/>
</dbReference>
<dbReference type="PANTHER" id="PTHR10986">
    <property type="entry name" value="39S RIBOSOMAL PROTEIN L20"/>
    <property type="match status" value="1"/>
</dbReference>
<dbReference type="Pfam" id="PF00453">
    <property type="entry name" value="Ribosomal_L20"/>
    <property type="match status" value="1"/>
</dbReference>
<dbReference type="PRINTS" id="PR00062">
    <property type="entry name" value="RIBOSOMALL20"/>
</dbReference>
<dbReference type="SUPFAM" id="SSF74731">
    <property type="entry name" value="Ribosomal protein L20"/>
    <property type="match status" value="1"/>
</dbReference>
<dbReference type="PROSITE" id="PS00937">
    <property type="entry name" value="RIBOSOMAL_L20"/>
    <property type="match status" value="1"/>
</dbReference>
<proteinExistence type="inferred from homology"/>
<name>RL20_MESFL</name>
<keyword id="KW-1185">Reference proteome</keyword>
<keyword id="KW-0687">Ribonucleoprotein</keyword>
<keyword id="KW-0689">Ribosomal protein</keyword>
<keyword id="KW-0694">RNA-binding</keyword>
<keyword id="KW-0699">rRNA-binding</keyword>
<reference key="1">
    <citation type="submission" date="2004-06" db="EMBL/GenBank/DDBJ databases">
        <authorList>
            <person name="Birren B.W."/>
            <person name="Stange-Thomann N."/>
            <person name="Hafez N."/>
            <person name="DeCaprio D."/>
            <person name="Fisher S."/>
            <person name="Butler J."/>
            <person name="Elkins T."/>
            <person name="Kodira C.D."/>
            <person name="Major J."/>
            <person name="Wang S."/>
            <person name="Nicol R."/>
            <person name="Nusbaum C."/>
        </authorList>
    </citation>
    <scope>NUCLEOTIDE SEQUENCE [LARGE SCALE GENOMIC DNA]</scope>
    <source>
        <strain>ATCC 33453 / NBRC 100688 / NCTC 11704 / L1</strain>
    </source>
</reference>
<evidence type="ECO:0000255" key="1">
    <source>
        <dbReference type="HAMAP-Rule" id="MF_00382"/>
    </source>
</evidence>
<evidence type="ECO:0000305" key="2"/>
<feature type="chain" id="PRO_0000177178" description="Large ribosomal subunit protein bL20">
    <location>
        <begin position="1"/>
        <end position="120"/>
    </location>
</feature>
<protein>
    <recommendedName>
        <fullName evidence="1">Large ribosomal subunit protein bL20</fullName>
    </recommendedName>
    <alternativeName>
        <fullName evidence="2">50S ribosomal protein L20</fullName>
    </alternativeName>
</protein>